<organism>
    <name type="scientific">Scolopendra viridicornis nigra</name>
    <name type="common">Brazilian giant centipede</name>
    <dbReference type="NCBI Taxonomy" id="486497"/>
    <lineage>
        <taxon>Eukaryota</taxon>
        <taxon>Metazoa</taxon>
        <taxon>Ecdysozoa</taxon>
        <taxon>Arthropoda</taxon>
        <taxon>Myriapoda</taxon>
        <taxon>Chilopoda</taxon>
        <taxon>Pleurostigmophora</taxon>
        <taxon>Scolopendromorpha</taxon>
        <taxon>Scolopendridae</taxon>
        <taxon>Scolopendra</taxon>
    </lineage>
</organism>
<sequence>AQTVRXDIPHHEXYAAGG</sequence>
<name>STX5_SCOVN</name>
<comment type="subcellular location">
    <subcellularLocation>
        <location evidence="1">Secreted</location>
    </subcellularLocation>
</comment>
<comment type="tissue specificity">
    <text evidence="3">Expressed by the venom gland.</text>
</comment>
<comment type="mass spectrometry"/>
<comment type="similarity">
    <text evidence="2">Belongs to the scolopendra toxin 5 family.</text>
</comment>
<reference key="1">
    <citation type="journal article" date="2007" name="Toxicon">
        <title>Venomic analyses of Scolopendra viridicornis nigra and Scolopendra angulata (Centipede, Scolopendromorpha): shedding light on venoms from a neglected group.</title>
        <authorList>
            <person name="Rates B."/>
            <person name="Bemquerer M.P."/>
            <person name="Richardson M."/>
            <person name="Borges M.H."/>
            <person name="Morales R.A.V."/>
            <person name="De Lima M.E."/>
            <person name="Pimenta A.M.C."/>
        </authorList>
    </citation>
    <scope>PROTEIN SEQUENCE</scope>
    <scope>MASS SPECTROMETRY</scope>
    <scope>SUBCELLULAR LOCATION</scope>
    <source>
        <tissue>Venom</tissue>
    </source>
</reference>
<dbReference type="GO" id="GO:0005576">
    <property type="term" value="C:extracellular region"/>
    <property type="evidence" value="ECO:0007669"/>
    <property type="project" value="UniProtKB-SubCell"/>
</dbReference>
<dbReference type="GO" id="GO:0090729">
    <property type="term" value="F:toxin activity"/>
    <property type="evidence" value="ECO:0007669"/>
    <property type="project" value="UniProtKB-KW"/>
</dbReference>
<keyword id="KW-0903">Direct protein sequencing</keyword>
<keyword id="KW-0528">Neurotoxin</keyword>
<keyword id="KW-0964">Secreted</keyword>
<keyword id="KW-0800">Toxin</keyword>
<evidence type="ECO:0000269" key="1">
    <source>
    </source>
</evidence>
<evidence type="ECO:0000305" key="2"/>
<evidence type="ECO:0000305" key="3">
    <source>
    </source>
</evidence>
<feature type="chain" id="PRO_0000352862" description="Scolopendra 5924.74 Da toxin">
    <location>
        <begin position="1"/>
        <end position="18" status="greater than"/>
    </location>
</feature>
<feature type="non-terminal residue">
    <location>
        <position position="18"/>
    </location>
</feature>
<proteinExistence type="evidence at protein level"/>
<accession>P0C8C6</accession>
<protein>
    <recommendedName>
        <fullName>Scolopendra 5924.74 Da toxin</fullName>
    </recommendedName>
</protein>